<protein>
    <recommendedName>
        <fullName evidence="3">Small ribosomal subunit protein eS1</fullName>
    </recommendedName>
    <alternativeName>
        <fullName evidence="5">40S ribosomal protein S3a</fullName>
    </alternativeName>
</protein>
<dbReference type="EMBL" id="AB291556">
    <property type="protein sequence ID" value="BAF45891.1"/>
    <property type="molecule type" value="mRNA"/>
</dbReference>
<dbReference type="RefSeq" id="XP_043884230.1">
    <property type="nucleotide sequence ID" value="XM_044028295.1"/>
</dbReference>
<dbReference type="SMR" id="A2Q0R8"/>
<dbReference type="GeneID" id="122771020"/>
<dbReference type="GO" id="GO:0022627">
    <property type="term" value="C:cytosolic small ribosomal subunit"/>
    <property type="evidence" value="ECO:0007669"/>
    <property type="project" value="UniProtKB-UniRule"/>
</dbReference>
<dbReference type="GO" id="GO:0005730">
    <property type="term" value="C:nucleolus"/>
    <property type="evidence" value="ECO:0007669"/>
    <property type="project" value="UniProtKB-SubCell"/>
</dbReference>
<dbReference type="GO" id="GO:0032040">
    <property type="term" value="C:small-subunit processome"/>
    <property type="evidence" value="ECO:0000250"/>
    <property type="project" value="UniProtKB"/>
</dbReference>
<dbReference type="GO" id="GO:0003735">
    <property type="term" value="F:structural constituent of ribosome"/>
    <property type="evidence" value="ECO:0007669"/>
    <property type="project" value="UniProtKB-UniRule"/>
</dbReference>
<dbReference type="GO" id="GO:0042274">
    <property type="term" value="P:ribosomal small subunit biogenesis"/>
    <property type="evidence" value="ECO:0000250"/>
    <property type="project" value="UniProtKB"/>
</dbReference>
<dbReference type="GO" id="GO:0006412">
    <property type="term" value="P:translation"/>
    <property type="evidence" value="ECO:0007669"/>
    <property type="project" value="UniProtKB-UniRule"/>
</dbReference>
<dbReference type="HAMAP" id="MF_03122">
    <property type="entry name" value="Ribosomal_eS1_euk"/>
    <property type="match status" value="1"/>
</dbReference>
<dbReference type="InterPro" id="IPR001593">
    <property type="entry name" value="Ribosomal_eS1"/>
</dbReference>
<dbReference type="InterPro" id="IPR018281">
    <property type="entry name" value="Ribosomal_eS1_CS"/>
</dbReference>
<dbReference type="InterPro" id="IPR027500">
    <property type="entry name" value="Ribosomal_eS1_euk"/>
</dbReference>
<dbReference type="PANTHER" id="PTHR11830">
    <property type="entry name" value="40S RIBOSOMAL PROTEIN S3A"/>
    <property type="match status" value="1"/>
</dbReference>
<dbReference type="Pfam" id="PF01015">
    <property type="entry name" value="Ribosomal_S3Ae"/>
    <property type="match status" value="1"/>
</dbReference>
<dbReference type="SMART" id="SM01397">
    <property type="entry name" value="Ribosomal_S3Ae"/>
    <property type="match status" value="1"/>
</dbReference>
<dbReference type="PROSITE" id="PS01191">
    <property type="entry name" value="RIBOSOMAL_S3AE"/>
    <property type="match status" value="1"/>
</dbReference>
<accession>A2Q0R8</accession>
<evidence type="ECO:0000250" key="1">
    <source>
        <dbReference type="UniProtKB" id="P61247"/>
    </source>
</evidence>
<evidence type="ECO:0000250" key="2">
    <source>
        <dbReference type="UniProtKB" id="P97351"/>
    </source>
</evidence>
<evidence type="ECO:0000255" key="3">
    <source>
        <dbReference type="HAMAP-Rule" id="MF_03122"/>
    </source>
</evidence>
<evidence type="ECO:0000256" key="4">
    <source>
        <dbReference type="SAM" id="MobiDB-lite"/>
    </source>
</evidence>
<evidence type="ECO:0000305" key="5"/>
<gene>
    <name type="primary">rps3a</name>
</gene>
<proteinExistence type="evidence at transcript level"/>
<name>RS3A_SOLSE</name>
<sequence>MAVGKNKRLTKGGKKGAKKKIVDPFSKKDWYDVKAPAMFNIRNLGKTLVTRTQGTRIASDGLKGRVFEVSLADLQNDEVAFRKFKLITEDVQGKNCLTNFHGMDLTRDKMCSMVKKWQTMIEAHVDVKTTDGYLLRLFCVGFTKKRTNQIRKTSYAQHQQVRQIRKKMMEIMTREVQTNDLKEVVNKLIPDSVGKDIEKACQSIYPLHDVYVRKVKMLKKPKFELGKLMELHGEGGTGTATKATGDDTGAKVERADGYEPPIQETV</sequence>
<organism>
    <name type="scientific">Solea senegalensis</name>
    <name type="common">Senegalese sole</name>
    <dbReference type="NCBI Taxonomy" id="28829"/>
    <lineage>
        <taxon>Eukaryota</taxon>
        <taxon>Metazoa</taxon>
        <taxon>Chordata</taxon>
        <taxon>Craniata</taxon>
        <taxon>Vertebrata</taxon>
        <taxon>Euteleostomi</taxon>
        <taxon>Actinopterygii</taxon>
        <taxon>Neopterygii</taxon>
        <taxon>Teleostei</taxon>
        <taxon>Neoteleostei</taxon>
        <taxon>Acanthomorphata</taxon>
        <taxon>Carangaria</taxon>
        <taxon>Pleuronectiformes</taxon>
        <taxon>Pleuronectoidei</taxon>
        <taxon>Soleidae</taxon>
        <taxon>Solea</taxon>
    </lineage>
</organism>
<reference key="1">
    <citation type="journal article" date="2007" name="BMC Evol. Biol.">
        <title>Comparative sequence analysis of the complete set of 40S ribosomal proteins in the Senegalese sole (Solea senegalensis Kaup) and Atlantic halibut (Hippoglossus hippoglossus L.) (Teleostei: Pleuronectiformes): phylogeny and tissue- and development-specific expression.</title>
        <authorList>
            <person name="Manchado M."/>
            <person name="Infante C."/>
            <person name="Asensio E."/>
            <person name="Canavate J.P."/>
            <person name="Douglas S.E."/>
        </authorList>
    </citation>
    <scope>NUCLEOTIDE SEQUENCE [MRNA]</scope>
</reference>
<comment type="function">
    <text evidence="1 3">Component of the small ribosomal subunit. The ribosome is a large ribonucleoprotein complex responsible for the synthesis of proteins in the cell. Part of the small subunit (SSU) processome, first precursor of the small eukaryotic ribosomal subunit. During the assembly of the SSU processome in the nucleolus, many ribosome biogenesis factors, an RNA chaperone and ribosomal proteins associate with the nascent pre-rRNA and work in concert to generate RNA folding, modifications, rearrangements and cleavage as well as targeted degradation of pre-ribosomal RNA by the RNA exosome (By similarity). May play a role during erythropoiesis (By similarity).</text>
</comment>
<comment type="subunit">
    <text evidence="1">Component of the small ribosomal subunit. Mature ribosomes consist of a small (40S) and a large (60S) subunit. The 40S subunit contains about 33 different proteins and 1 molecule of RNA (18S). The 60S subunit contains about 49 different proteins and 3 molecules of RNA (28S, 5.8S and 5S). Part of the small subunit (SSU) processome, composed of more than 70 proteins and the RNA chaperone small nucleolar RNA (snoRNA) U3.</text>
</comment>
<comment type="subcellular location">
    <subcellularLocation>
        <location evidence="2 3">Cytoplasm</location>
    </subcellularLocation>
    <subcellularLocation>
        <location evidence="2 3">Nucleus</location>
    </subcellularLocation>
    <subcellularLocation>
        <location evidence="1">Nucleus</location>
        <location evidence="1">Nucleolus</location>
    </subcellularLocation>
</comment>
<comment type="similarity">
    <text evidence="3">Belongs to the eukaryotic ribosomal protein eS1 family.</text>
</comment>
<keyword id="KW-0963">Cytoplasm</keyword>
<keyword id="KW-0539">Nucleus</keyword>
<keyword id="KW-0687">Ribonucleoprotein</keyword>
<keyword id="KW-0689">Ribosomal protein</keyword>
<feature type="initiator methionine" description="Removed" evidence="3">
    <location>
        <position position="1"/>
    </location>
</feature>
<feature type="chain" id="PRO_0000389297" description="Small ribosomal subunit protein eS1">
    <location>
        <begin position="2"/>
        <end position="266"/>
    </location>
</feature>
<feature type="region of interest" description="Disordered" evidence="4">
    <location>
        <begin position="234"/>
        <end position="266"/>
    </location>
</feature>
<feature type="compositionally biased region" description="Basic and acidic residues" evidence="4">
    <location>
        <begin position="244"/>
        <end position="257"/>
    </location>
</feature>